<organism>
    <name type="scientific">Rhodopseudomonas palustris (strain BisA53)</name>
    <dbReference type="NCBI Taxonomy" id="316055"/>
    <lineage>
        <taxon>Bacteria</taxon>
        <taxon>Pseudomonadati</taxon>
        <taxon>Pseudomonadota</taxon>
        <taxon>Alphaproteobacteria</taxon>
        <taxon>Hyphomicrobiales</taxon>
        <taxon>Nitrobacteraceae</taxon>
        <taxon>Rhodopseudomonas</taxon>
    </lineage>
</organism>
<keyword id="KW-0687">Ribonucleoprotein</keyword>
<keyword id="KW-0689">Ribosomal protein</keyword>
<keyword id="KW-0694">RNA-binding</keyword>
<keyword id="KW-0699">rRNA-binding</keyword>
<keyword id="KW-0820">tRNA-binding</keyword>
<name>RS13_RHOP5</name>
<dbReference type="EMBL" id="CP000463">
    <property type="protein sequence ID" value="ABJ07494.1"/>
    <property type="molecule type" value="Genomic_DNA"/>
</dbReference>
<dbReference type="SMR" id="Q07KP0"/>
<dbReference type="STRING" id="316055.RPE_3564"/>
<dbReference type="KEGG" id="rpe:RPE_3564"/>
<dbReference type="eggNOG" id="COG0099">
    <property type="taxonomic scope" value="Bacteria"/>
</dbReference>
<dbReference type="HOGENOM" id="CLU_103849_1_2_5"/>
<dbReference type="OrthoDB" id="9803610at2"/>
<dbReference type="GO" id="GO:0005829">
    <property type="term" value="C:cytosol"/>
    <property type="evidence" value="ECO:0007669"/>
    <property type="project" value="TreeGrafter"/>
</dbReference>
<dbReference type="GO" id="GO:0015935">
    <property type="term" value="C:small ribosomal subunit"/>
    <property type="evidence" value="ECO:0007669"/>
    <property type="project" value="TreeGrafter"/>
</dbReference>
<dbReference type="GO" id="GO:0019843">
    <property type="term" value="F:rRNA binding"/>
    <property type="evidence" value="ECO:0007669"/>
    <property type="project" value="UniProtKB-UniRule"/>
</dbReference>
<dbReference type="GO" id="GO:0003735">
    <property type="term" value="F:structural constituent of ribosome"/>
    <property type="evidence" value="ECO:0007669"/>
    <property type="project" value="InterPro"/>
</dbReference>
<dbReference type="GO" id="GO:0000049">
    <property type="term" value="F:tRNA binding"/>
    <property type="evidence" value="ECO:0007669"/>
    <property type="project" value="UniProtKB-UniRule"/>
</dbReference>
<dbReference type="GO" id="GO:0006412">
    <property type="term" value="P:translation"/>
    <property type="evidence" value="ECO:0007669"/>
    <property type="project" value="UniProtKB-UniRule"/>
</dbReference>
<dbReference type="FunFam" id="1.10.8.50:FF:000001">
    <property type="entry name" value="30S ribosomal protein S13"/>
    <property type="match status" value="1"/>
</dbReference>
<dbReference type="FunFam" id="4.10.910.10:FF:000001">
    <property type="entry name" value="30S ribosomal protein S13"/>
    <property type="match status" value="1"/>
</dbReference>
<dbReference type="Gene3D" id="1.10.8.50">
    <property type="match status" value="1"/>
</dbReference>
<dbReference type="Gene3D" id="4.10.910.10">
    <property type="entry name" value="30s ribosomal protein s13, domain 2"/>
    <property type="match status" value="1"/>
</dbReference>
<dbReference type="HAMAP" id="MF_01315">
    <property type="entry name" value="Ribosomal_uS13"/>
    <property type="match status" value="1"/>
</dbReference>
<dbReference type="InterPro" id="IPR027437">
    <property type="entry name" value="Rbsml_uS13_C"/>
</dbReference>
<dbReference type="InterPro" id="IPR001892">
    <property type="entry name" value="Ribosomal_uS13"/>
</dbReference>
<dbReference type="InterPro" id="IPR010979">
    <property type="entry name" value="Ribosomal_uS13-like_H2TH"/>
</dbReference>
<dbReference type="InterPro" id="IPR019980">
    <property type="entry name" value="Ribosomal_uS13_bac-type"/>
</dbReference>
<dbReference type="InterPro" id="IPR018269">
    <property type="entry name" value="Ribosomal_uS13_CS"/>
</dbReference>
<dbReference type="NCBIfam" id="TIGR03631">
    <property type="entry name" value="uS13_bact"/>
    <property type="match status" value="1"/>
</dbReference>
<dbReference type="PANTHER" id="PTHR10871">
    <property type="entry name" value="30S RIBOSOMAL PROTEIN S13/40S RIBOSOMAL PROTEIN S18"/>
    <property type="match status" value="1"/>
</dbReference>
<dbReference type="PANTHER" id="PTHR10871:SF1">
    <property type="entry name" value="SMALL RIBOSOMAL SUBUNIT PROTEIN US13M"/>
    <property type="match status" value="1"/>
</dbReference>
<dbReference type="Pfam" id="PF00416">
    <property type="entry name" value="Ribosomal_S13"/>
    <property type="match status" value="1"/>
</dbReference>
<dbReference type="PIRSF" id="PIRSF002134">
    <property type="entry name" value="Ribosomal_S13"/>
    <property type="match status" value="1"/>
</dbReference>
<dbReference type="SUPFAM" id="SSF46946">
    <property type="entry name" value="S13-like H2TH domain"/>
    <property type="match status" value="1"/>
</dbReference>
<dbReference type="PROSITE" id="PS00646">
    <property type="entry name" value="RIBOSOMAL_S13_1"/>
    <property type="match status" value="1"/>
</dbReference>
<dbReference type="PROSITE" id="PS50159">
    <property type="entry name" value="RIBOSOMAL_S13_2"/>
    <property type="match status" value="1"/>
</dbReference>
<accession>Q07KP0</accession>
<proteinExistence type="inferred from homology"/>
<evidence type="ECO:0000255" key="1">
    <source>
        <dbReference type="HAMAP-Rule" id="MF_01315"/>
    </source>
</evidence>
<evidence type="ECO:0000256" key="2">
    <source>
        <dbReference type="SAM" id="MobiDB-lite"/>
    </source>
</evidence>
<evidence type="ECO:0000305" key="3"/>
<feature type="chain" id="PRO_0000306692" description="Small ribosomal subunit protein uS13">
    <location>
        <begin position="1"/>
        <end position="122"/>
    </location>
</feature>
<feature type="region of interest" description="Disordered" evidence="2">
    <location>
        <begin position="99"/>
        <end position="122"/>
    </location>
</feature>
<protein>
    <recommendedName>
        <fullName evidence="1">Small ribosomal subunit protein uS13</fullName>
    </recommendedName>
    <alternativeName>
        <fullName evidence="3">30S ribosomal protein S13</fullName>
    </alternativeName>
</protein>
<reference key="1">
    <citation type="submission" date="2006-09" db="EMBL/GenBank/DDBJ databases">
        <title>Complete sequence of Rhodopseudomonas palustris BisA53.</title>
        <authorList>
            <consortium name="US DOE Joint Genome Institute"/>
            <person name="Copeland A."/>
            <person name="Lucas S."/>
            <person name="Lapidus A."/>
            <person name="Barry K."/>
            <person name="Detter J.C."/>
            <person name="Glavina del Rio T."/>
            <person name="Hammon N."/>
            <person name="Israni S."/>
            <person name="Dalin E."/>
            <person name="Tice H."/>
            <person name="Pitluck S."/>
            <person name="Chain P."/>
            <person name="Malfatti S."/>
            <person name="Shin M."/>
            <person name="Vergez L."/>
            <person name="Schmutz J."/>
            <person name="Larimer F."/>
            <person name="Land M."/>
            <person name="Hauser L."/>
            <person name="Pelletier D.A."/>
            <person name="Kyrpides N."/>
            <person name="Kim E."/>
            <person name="Harwood C.S."/>
            <person name="Oda Y."/>
            <person name="Richardson P."/>
        </authorList>
    </citation>
    <scope>NUCLEOTIDE SEQUENCE [LARGE SCALE GENOMIC DNA]</scope>
    <source>
        <strain>BisA53</strain>
    </source>
</reference>
<comment type="function">
    <text evidence="1">Located at the top of the head of the 30S subunit, it contacts several helices of the 16S rRNA. In the 70S ribosome it contacts the 23S rRNA (bridge B1a) and protein L5 of the 50S subunit (bridge B1b), connecting the 2 subunits; these bridges are implicated in subunit movement. Contacts the tRNAs in the A and P-sites.</text>
</comment>
<comment type="subunit">
    <text evidence="1">Part of the 30S ribosomal subunit. Forms a loose heterodimer with protein S19. Forms two bridges to the 50S subunit in the 70S ribosome.</text>
</comment>
<comment type="similarity">
    <text evidence="1">Belongs to the universal ribosomal protein uS13 family.</text>
</comment>
<gene>
    <name evidence="1" type="primary">rpsM</name>
    <name type="ordered locus">RPE_3564</name>
</gene>
<sequence length="122" mass="13928">MARIAGVNIPTNKRVLIALQYIHGIGQKHAADIVEKVKIPLDRRVNQLSDQEVLQIREVIDRDYMVEGDLRRETGMNIKRLMDLGCYRGLRHRRGLPVRGQRTHTNARTRKGPAKAIAGKKK</sequence>